<organism>
    <name type="scientific">Homo sapiens</name>
    <name type="common">Human</name>
    <dbReference type="NCBI Taxonomy" id="9606"/>
    <lineage>
        <taxon>Eukaryota</taxon>
        <taxon>Metazoa</taxon>
        <taxon>Chordata</taxon>
        <taxon>Craniata</taxon>
        <taxon>Vertebrata</taxon>
        <taxon>Euteleostomi</taxon>
        <taxon>Mammalia</taxon>
        <taxon>Eutheria</taxon>
        <taxon>Euarchontoglires</taxon>
        <taxon>Primates</taxon>
        <taxon>Haplorrhini</taxon>
        <taxon>Catarrhini</taxon>
        <taxon>Hominidae</taxon>
        <taxon>Homo</taxon>
    </lineage>
</organism>
<comment type="function">
    <text evidence="1">May play a role in the trafficking of a subset of G-protein coupled receptors.</text>
</comment>
<comment type="subcellular location">
    <subcellularLocation>
        <location evidence="2">Membrane</location>
        <topology evidence="2">Multi-pass membrane protein</topology>
    </subcellularLocation>
</comment>
<comment type="alternative products">
    <event type="alternative splicing"/>
    <isoform>
        <id>Q5SWX8-1</id>
        <name>1</name>
        <sequence type="displayed"/>
    </isoform>
    <isoform>
        <id>Q5SWX8-2</id>
        <name>2</name>
        <sequence type="described" ref="VSP_028098"/>
    </isoform>
    <isoform>
        <id>Q5SWX8-3</id>
        <name>3</name>
        <sequence type="described" ref="VSP_028099 VSP_028100"/>
    </isoform>
    <isoform>
        <id>Q5SWX8-4</id>
        <name>4</name>
        <sequence type="described" ref="VSP_044478"/>
    </isoform>
</comment>
<comment type="tissue specificity">
    <text evidence="4">Ubiquitously expressed.</text>
</comment>
<comment type="similarity">
    <text evidence="7">Belongs to the ODR-4 family.</text>
</comment>
<comment type="sequence caution" evidence="7">
    <conflict type="erroneous initiation">
        <sequence resource="EMBL-CDS" id="BAB15356"/>
    </conflict>
</comment>
<feature type="chain" id="PRO_0000304683" description="Protein odr-4 homolog">
    <location>
        <begin position="1"/>
        <end position="454"/>
    </location>
</feature>
<feature type="transmembrane region" description="Helical" evidence="2">
    <location>
        <begin position="82"/>
        <end position="102"/>
    </location>
</feature>
<feature type="transmembrane region" description="Helical" evidence="2">
    <location>
        <begin position="432"/>
        <end position="452"/>
    </location>
</feature>
<feature type="splice variant" id="VSP_044478" description="In isoform 4." evidence="5">
    <location>
        <begin position="79"/>
        <end position="110"/>
    </location>
</feature>
<feature type="splice variant" id="VSP_028098" description="In isoform 2." evidence="6">
    <location>
        <begin position="238"/>
        <end position="260"/>
    </location>
</feature>
<feature type="splice variant" id="VSP_028099" description="In isoform 3." evidence="5">
    <original>DS</original>
    <variation>RF</variation>
    <location>
        <begin position="334"/>
        <end position="335"/>
    </location>
</feature>
<feature type="splice variant" id="VSP_028100" description="In isoform 3." evidence="5">
    <location>
        <begin position="336"/>
        <end position="454"/>
    </location>
</feature>
<feature type="sequence variant" id="VAR_035059" description="In dbSNP:rs12084264." evidence="3">
    <original>S</original>
    <variation>C</variation>
    <location>
        <position position="251"/>
    </location>
</feature>
<feature type="sequence conflict" description="In Ref. 2; ABF71985." evidence="7" ref="2">
    <original>E</original>
    <variation>G</variation>
    <location>
        <position position="51"/>
    </location>
</feature>
<feature type="sequence conflict" description="In Ref. 2; ABF71985." evidence="7" ref="2">
    <original>F</original>
    <variation>S</variation>
    <location>
        <position position="104"/>
    </location>
</feature>
<feature type="sequence conflict" description="In Ref. 2; ABF71985." evidence="7" ref="2">
    <original>K</original>
    <variation>E</variation>
    <location>
        <position position="158"/>
    </location>
</feature>
<feature type="sequence conflict" description="In Ref. 2; ABF71985." evidence="7" ref="2">
    <original>E</original>
    <variation>G</variation>
    <location>
        <position position="216"/>
    </location>
</feature>
<feature type="sequence conflict" description="In Ref. 2; ABF71985." evidence="7" ref="2">
    <original>C</original>
    <variation>R</variation>
    <location>
        <position position="358"/>
    </location>
</feature>
<evidence type="ECO:0000250" key="1">
    <source>
        <dbReference type="UniProtKB" id="Q8I7F8"/>
    </source>
</evidence>
<evidence type="ECO:0000255" key="2"/>
<evidence type="ECO:0000269" key="3">
    <source>
    </source>
</evidence>
<evidence type="ECO:0000269" key="4">
    <source>
    </source>
</evidence>
<evidence type="ECO:0000303" key="5">
    <source>
    </source>
</evidence>
<evidence type="ECO:0000303" key="6">
    <source ref="2"/>
</evidence>
<evidence type="ECO:0000305" key="7"/>
<evidence type="ECO:0000312" key="8">
    <source>
        <dbReference type="HGNC" id="HGNC:24299"/>
    </source>
</evidence>
<keyword id="KW-0025">Alternative splicing</keyword>
<keyword id="KW-0472">Membrane</keyword>
<keyword id="KW-1267">Proteomics identification</keyword>
<keyword id="KW-1185">Reference proteome</keyword>
<keyword id="KW-0812">Transmembrane</keyword>
<keyword id="KW-1133">Transmembrane helix</keyword>
<gene>
    <name evidence="8" type="primary">ODR4</name>
    <name type="synonym">C1orf27</name>
    <name type="synonym">TTG1</name>
    <name type="synonym">TTG1A</name>
</gene>
<name>ODR4_HUMAN</name>
<protein>
    <recommendedName>
        <fullName>Protein odr-4 homolog</fullName>
        <shortName>hODR-4</shortName>
    </recommendedName>
    <alternativeName>
        <fullName>LAG1-interacting protein</fullName>
    </alternativeName>
    <alternativeName>
        <fullName>Transactivated by transforming growth factor beta protein 1</fullName>
    </alternativeName>
</protein>
<accession>Q5SWX8</accession>
<accession>B4DNY0</accession>
<accession>E9PFR7</accession>
<accession>Q19CC6</accession>
<accession>Q8WYB6</accession>
<accession>Q9BTS2</accession>
<accession>Q9H6A6</accession>
<accession>Q9NX06</accession>
<sequence length="454" mass="51103">MGRTYIVEETVGQYLSNINLQGKAFVSGLLIGQCSSQKDYVILATRTPPKEEQSENLKHPKAKLDNLDEEWATEHACQVSRMLPGGLLVLGVFIITTLELANDFQNALRRLMFAVEKSINRKRLWNFTEEEVSERVTLHICASTKKIFCRTYDIHDPKSSARPADWKYQSGLSSSWLSLECTVHINIHIPLSATSVSYTLEKNTKNGLTRWAKEIENGVYLINGQVKDEDCDLLEGQKKSSRGNTQATSHSFDVRVLTQLLLNSDHRSTATVQICSGSVNLKGAVKCRAYIHSSKPKVKDAVQAVKRDILNTVADRCEMLFEDLLLNEIPEKKDSEKEFHVLPYRVFVPLPGSTVMLCDYKFDDESAEEIRDHFMEMLDHTIQIEDLEIAEETNTACMSSSMNSQASLDNTDDEQPKQPIKTTMLLKIQQNIGVIAAFTVAVLAAGISFHYFSD</sequence>
<reference key="1">
    <citation type="journal article" date="2005" name="Genomics">
        <title>Ubiquitously expressed GPCR membrane-trafficking orthologs.</title>
        <authorList>
            <person name="Lehman C.W."/>
            <person name="Lee J.D.R."/>
            <person name="Komives C.F."/>
        </authorList>
    </citation>
    <scope>NUCLEOTIDE SEQUENCE [MRNA] (ISOFORM 1)</scope>
    <scope>TISSUE SPECIFICITY</scope>
    <source>
        <tissue>Brain</tissue>
    </source>
</reference>
<reference key="2">
    <citation type="submission" date="2005-12" db="EMBL/GenBank/DDBJ databases">
        <title>Cloning of a gene transactivated by recombinant transforming growth factor beta.</title>
        <authorList>
            <person name="Xiao L."/>
            <person name="Cheng J."/>
            <person name="Hong Y."/>
        </authorList>
    </citation>
    <scope>NUCLEOTIDE SEQUENCE [MRNA] (ISOFORMS 1 AND 2)</scope>
</reference>
<reference key="3">
    <citation type="journal article" date="2004" name="Nat. Genet.">
        <title>Complete sequencing and characterization of 21,243 full-length human cDNAs.</title>
        <authorList>
            <person name="Ota T."/>
            <person name="Suzuki Y."/>
            <person name="Nishikawa T."/>
            <person name="Otsuki T."/>
            <person name="Sugiyama T."/>
            <person name="Irie R."/>
            <person name="Wakamatsu A."/>
            <person name="Hayashi K."/>
            <person name="Sato H."/>
            <person name="Nagai K."/>
            <person name="Kimura K."/>
            <person name="Makita H."/>
            <person name="Sekine M."/>
            <person name="Obayashi M."/>
            <person name="Nishi T."/>
            <person name="Shibahara T."/>
            <person name="Tanaka T."/>
            <person name="Ishii S."/>
            <person name="Yamamoto J."/>
            <person name="Saito K."/>
            <person name="Kawai Y."/>
            <person name="Isono Y."/>
            <person name="Nakamura Y."/>
            <person name="Nagahari K."/>
            <person name="Murakami K."/>
            <person name="Yasuda T."/>
            <person name="Iwayanagi T."/>
            <person name="Wagatsuma M."/>
            <person name="Shiratori A."/>
            <person name="Sudo H."/>
            <person name="Hosoiri T."/>
            <person name="Kaku Y."/>
            <person name="Kodaira H."/>
            <person name="Kondo H."/>
            <person name="Sugawara M."/>
            <person name="Takahashi M."/>
            <person name="Kanda K."/>
            <person name="Yokoi T."/>
            <person name="Furuya T."/>
            <person name="Kikkawa E."/>
            <person name="Omura Y."/>
            <person name="Abe K."/>
            <person name="Kamihara K."/>
            <person name="Katsuta N."/>
            <person name="Sato K."/>
            <person name="Tanikawa M."/>
            <person name="Yamazaki M."/>
            <person name="Ninomiya K."/>
            <person name="Ishibashi T."/>
            <person name="Yamashita H."/>
            <person name="Murakawa K."/>
            <person name="Fujimori K."/>
            <person name="Tanai H."/>
            <person name="Kimata M."/>
            <person name="Watanabe M."/>
            <person name="Hiraoka S."/>
            <person name="Chiba Y."/>
            <person name="Ishida S."/>
            <person name="Ono Y."/>
            <person name="Takiguchi S."/>
            <person name="Watanabe S."/>
            <person name="Yosida M."/>
            <person name="Hotuta T."/>
            <person name="Kusano J."/>
            <person name="Kanehori K."/>
            <person name="Takahashi-Fujii A."/>
            <person name="Hara H."/>
            <person name="Tanase T.-O."/>
            <person name="Nomura Y."/>
            <person name="Togiya S."/>
            <person name="Komai F."/>
            <person name="Hara R."/>
            <person name="Takeuchi K."/>
            <person name="Arita M."/>
            <person name="Imose N."/>
            <person name="Musashino K."/>
            <person name="Yuuki H."/>
            <person name="Oshima A."/>
            <person name="Sasaki N."/>
            <person name="Aotsuka S."/>
            <person name="Yoshikawa Y."/>
            <person name="Matsunawa H."/>
            <person name="Ichihara T."/>
            <person name="Shiohata N."/>
            <person name="Sano S."/>
            <person name="Moriya S."/>
            <person name="Momiyama H."/>
            <person name="Satoh N."/>
            <person name="Takami S."/>
            <person name="Terashima Y."/>
            <person name="Suzuki O."/>
            <person name="Nakagawa S."/>
            <person name="Senoh A."/>
            <person name="Mizoguchi H."/>
            <person name="Goto Y."/>
            <person name="Shimizu F."/>
            <person name="Wakebe H."/>
            <person name="Hishigaki H."/>
            <person name="Watanabe T."/>
            <person name="Sugiyama A."/>
            <person name="Takemoto M."/>
            <person name="Kawakami B."/>
            <person name="Yamazaki M."/>
            <person name="Watanabe K."/>
            <person name="Kumagai A."/>
            <person name="Itakura S."/>
            <person name="Fukuzumi Y."/>
            <person name="Fujimori Y."/>
            <person name="Komiyama M."/>
            <person name="Tashiro H."/>
            <person name="Tanigami A."/>
            <person name="Fujiwara T."/>
            <person name="Ono T."/>
            <person name="Yamada K."/>
            <person name="Fujii Y."/>
            <person name="Ozaki K."/>
            <person name="Hirao M."/>
            <person name="Ohmori Y."/>
            <person name="Kawabata A."/>
            <person name="Hikiji T."/>
            <person name="Kobatake N."/>
            <person name="Inagaki H."/>
            <person name="Ikema Y."/>
            <person name="Okamoto S."/>
            <person name="Okitani R."/>
            <person name="Kawakami T."/>
            <person name="Noguchi S."/>
            <person name="Itoh T."/>
            <person name="Shigeta K."/>
            <person name="Senba T."/>
            <person name="Matsumura K."/>
            <person name="Nakajima Y."/>
            <person name="Mizuno T."/>
            <person name="Morinaga M."/>
            <person name="Sasaki M."/>
            <person name="Togashi T."/>
            <person name="Oyama M."/>
            <person name="Hata H."/>
            <person name="Watanabe M."/>
            <person name="Komatsu T."/>
            <person name="Mizushima-Sugano J."/>
            <person name="Satoh T."/>
            <person name="Shirai Y."/>
            <person name="Takahashi Y."/>
            <person name="Nakagawa K."/>
            <person name="Okumura K."/>
            <person name="Nagase T."/>
            <person name="Nomura N."/>
            <person name="Kikuchi H."/>
            <person name="Masuho Y."/>
            <person name="Yamashita R."/>
            <person name="Nakai K."/>
            <person name="Yada T."/>
            <person name="Nakamura Y."/>
            <person name="Ohara O."/>
            <person name="Isogai T."/>
            <person name="Sugano S."/>
        </authorList>
    </citation>
    <scope>NUCLEOTIDE SEQUENCE [LARGE SCALE MRNA] (ISOFORMS 3 AND 4)</scope>
    <scope>NUCLEOTIDE SEQUENCE [LARGE SCALE MRNA] OF 66-454 (ISOFORM 1)</scope>
    <scope>VARIANT CYS-251</scope>
    <source>
        <tissue>Lung</tissue>
        <tissue>Signet-ring cell carcinoma</tissue>
    </source>
</reference>
<reference key="4">
    <citation type="journal article" date="2006" name="Nature">
        <title>The DNA sequence and biological annotation of human chromosome 1.</title>
        <authorList>
            <person name="Gregory S.G."/>
            <person name="Barlow K.F."/>
            <person name="McLay K.E."/>
            <person name="Kaul R."/>
            <person name="Swarbreck D."/>
            <person name="Dunham A."/>
            <person name="Scott C.E."/>
            <person name="Howe K.L."/>
            <person name="Woodfine K."/>
            <person name="Spencer C.C.A."/>
            <person name="Jones M.C."/>
            <person name="Gillson C."/>
            <person name="Searle S."/>
            <person name="Zhou Y."/>
            <person name="Kokocinski F."/>
            <person name="McDonald L."/>
            <person name="Evans R."/>
            <person name="Phillips K."/>
            <person name="Atkinson A."/>
            <person name="Cooper R."/>
            <person name="Jones C."/>
            <person name="Hall R.E."/>
            <person name="Andrews T.D."/>
            <person name="Lloyd C."/>
            <person name="Ainscough R."/>
            <person name="Almeida J.P."/>
            <person name="Ambrose K.D."/>
            <person name="Anderson F."/>
            <person name="Andrew R.W."/>
            <person name="Ashwell R.I.S."/>
            <person name="Aubin K."/>
            <person name="Babbage A.K."/>
            <person name="Bagguley C.L."/>
            <person name="Bailey J."/>
            <person name="Beasley H."/>
            <person name="Bethel G."/>
            <person name="Bird C.P."/>
            <person name="Bray-Allen S."/>
            <person name="Brown J.Y."/>
            <person name="Brown A.J."/>
            <person name="Buckley D."/>
            <person name="Burton J."/>
            <person name="Bye J."/>
            <person name="Carder C."/>
            <person name="Chapman J.C."/>
            <person name="Clark S.Y."/>
            <person name="Clarke G."/>
            <person name="Clee C."/>
            <person name="Cobley V."/>
            <person name="Collier R.E."/>
            <person name="Corby N."/>
            <person name="Coville G.J."/>
            <person name="Davies J."/>
            <person name="Deadman R."/>
            <person name="Dunn M."/>
            <person name="Earthrowl M."/>
            <person name="Ellington A.G."/>
            <person name="Errington H."/>
            <person name="Frankish A."/>
            <person name="Frankland J."/>
            <person name="French L."/>
            <person name="Garner P."/>
            <person name="Garnett J."/>
            <person name="Gay L."/>
            <person name="Ghori M.R.J."/>
            <person name="Gibson R."/>
            <person name="Gilby L.M."/>
            <person name="Gillett W."/>
            <person name="Glithero R.J."/>
            <person name="Grafham D.V."/>
            <person name="Griffiths C."/>
            <person name="Griffiths-Jones S."/>
            <person name="Grocock R."/>
            <person name="Hammond S."/>
            <person name="Harrison E.S.I."/>
            <person name="Hart E."/>
            <person name="Haugen E."/>
            <person name="Heath P.D."/>
            <person name="Holmes S."/>
            <person name="Holt K."/>
            <person name="Howden P.J."/>
            <person name="Hunt A.R."/>
            <person name="Hunt S.E."/>
            <person name="Hunter G."/>
            <person name="Isherwood J."/>
            <person name="James R."/>
            <person name="Johnson C."/>
            <person name="Johnson D."/>
            <person name="Joy A."/>
            <person name="Kay M."/>
            <person name="Kershaw J.K."/>
            <person name="Kibukawa M."/>
            <person name="Kimberley A.M."/>
            <person name="King A."/>
            <person name="Knights A.J."/>
            <person name="Lad H."/>
            <person name="Laird G."/>
            <person name="Lawlor S."/>
            <person name="Leongamornlert D.A."/>
            <person name="Lloyd D.M."/>
            <person name="Loveland J."/>
            <person name="Lovell J."/>
            <person name="Lush M.J."/>
            <person name="Lyne R."/>
            <person name="Martin S."/>
            <person name="Mashreghi-Mohammadi M."/>
            <person name="Matthews L."/>
            <person name="Matthews N.S.W."/>
            <person name="McLaren S."/>
            <person name="Milne S."/>
            <person name="Mistry S."/>
            <person name="Moore M.J.F."/>
            <person name="Nickerson T."/>
            <person name="O'Dell C.N."/>
            <person name="Oliver K."/>
            <person name="Palmeiri A."/>
            <person name="Palmer S.A."/>
            <person name="Parker A."/>
            <person name="Patel D."/>
            <person name="Pearce A.V."/>
            <person name="Peck A.I."/>
            <person name="Pelan S."/>
            <person name="Phelps K."/>
            <person name="Phillimore B.J."/>
            <person name="Plumb R."/>
            <person name="Rajan J."/>
            <person name="Raymond C."/>
            <person name="Rouse G."/>
            <person name="Saenphimmachak C."/>
            <person name="Sehra H.K."/>
            <person name="Sheridan E."/>
            <person name="Shownkeen R."/>
            <person name="Sims S."/>
            <person name="Skuce C.D."/>
            <person name="Smith M."/>
            <person name="Steward C."/>
            <person name="Subramanian S."/>
            <person name="Sycamore N."/>
            <person name="Tracey A."/>
            <person name="Tromans A."/>
            <person name="Van Helmond Z."/>
            <person name="Wall M."/>
            <person name="Wallis J.M."/>
            <person name="White S."/>
            <person name="Whitehead S.L."/>
            <person name="Wilkinson J.E."/>
            <person name="Willey D.L."/>
            <person name="Williams H."/>
            <person name="Wilming L."/>
            <person name="Wray P.W."/>
            <person name="Wu Z."/>
            <person name="Coulson A."/>
            <person name="Vaudin M."/>
            <person name="Sulston J.E."/>
            <person name="Durbin R.M."/>
            <person name="Hubbard T."/>
            <person name="Wooster R."/>
            <person name="Dunham I."/>
            <person name="Carter N.P."/>
            <person name="McVean G."/>
            <person name="Ross M.T."/>
            <person name="Harrow J."/>
            <person name="Olson M.V."/>
            <person name="Beck S."/>
            <person name="Rogers J."/>
            <person name="Bentley D.R."/>
        </authorList>
    </citation>
    <scope>NUCLEOTIDE SEQUENCE [LARGE SCALE GENOMIC DNA]</scope>
</reference>
<reference key="5">
    <citation type="journal article" date="2004" name="Genome Res.">
        <title>The status, quality, and expansion of the NIH full-length cDNA project: the Mammalian Gene Collection (MGC).</title>
        <authorList>
            <consortium name="The MGC Project Team"/>
        </authorList>
    </citation>
    <scope>NUCLEOTIDE SEQUENCE [LARGE SCALE MRNA] (ISOFORM 1)</scope>
    <source>
        <tissue>Placenta</tissue>
    </source>
</reference>
<reference key="6">
    <citation type="submission" date="1999-12" db="EMBL/GenBank/DDBJ databases">
        <title>Interactors of a human homolog of yeast LAG1 gene.</title>
        <authorList>
            <person name="Pan H."/>
            <person name="Huo K.K."/>
            <person name="Li Y.Y."/>
        </authorList>
    </citation>
    <scope>NUCLEOTIDE SEQUENCE [MRNA] OF 368-454 (ISOFORMS 1/2)</scope>
    <source>
        <tissue>Brain</tissue>
    </source>
</reference>
<reference key="7">
    <citation type="journal article" date="2014" name="J. Proteomics">
        <title>An enzyme assisted RP-RPLC approach for in-depth analysis of human liver phosphoproteome.</title>
        <authorList>
            <person name="Bian Y."/>
            <person name="Song C."/>
            <person name="Cheng K."/>
            <person name="Dong M."/>
            <person name="Wang F."/>
            <person name="Huang J."/>
            <person name="Sun D."/>
            <person name="Wang L."/>
            <person name="Ye M."/>
            <person name="Zou H."/>
        </authorList>
    </citation>
    <scope>IDENTIFICATION BY MASS SPECTROMETRY [LARGE SCALE ANALYSIS]</scope>
    <source>
        <tissue>Liver</tissue>
    </source>
</reference>
<proteinExistence type="evidence at protein level"/>
<dbReference type="EMBL" id="AY854248">
    <property type="protein sequence ID" value="AAW30011.1"/>
    <property type="molecule type" value="mRNA"/>
</dbReference>
<dbReference type="EMBL" id="DQ323046">
    <property type="protein sequence ID" value="ABC50092.1"/>
    <property type="molecule type" value="mRNA"/>
</dbReference>
<dbReference type="EMBL" id="DQ529299">
    <property type="protein sequence ID" value="ABF71985.1"/>
    <property type="molecule type" value="mRNA"/>
</dbReference>
<dbReference type="EMBL" id="AK000512">
    <property type="protein sequence ID" value="BAA91218.1"/>
    <property type="molecule type" value="mRNA"/>
</dbReference>
<dbReference type="EMBL" id="AK026086">
    <property type="protein sequence ID" value="BAB15356.1"/>
    <property type="status" value="ALT_INIT"/>
    <property type="molecule type" value="mRNA"/>
</dbReference>
<dbReference type="EMBL" id="AK298107">
    <property type="protein sequence ID" value="BAG60392.1"/>
    <property type="molecule type" value="mRNA"/>
</dbReference>
<dbReference type="EMBL" id="AL596220">
    <property type="status" value="NOT_ANNOTATED_CDS"/>
    <property type="molecule type" value="Genomic_DNA"/>
</dbReference>
<dbReference type="EMBL" id="BC003397">
    <property type="protein sequence ID" value="AAH03397.2"/>
    <property type="molecule type" value="mRNA"/>
</dbReference>
<dbReference type="EMBL" id="AF214011">
    <property type="protein sequence ID" value="AAL56643.1"/>
    <property type="molecule type" value="mRNA"/>
</dbReference>
<dbReference type="CCDS" id="CCDS53448.1">
    <molecule id="Q5SWX8-1"/>
</dbReference>
<dbReference type="CCDS" id="CCDS53449.1">
    <molecule id="Q5SWX8-2"/>
</dbReference>
<dbReference type="CCDS" id="CCDS53450.1">
    <molecule id="Q5SWX8-4"/>
</dbReference>
<dbReference type="RefSeq" id="NP_001157717.1">
    <molecule id="Q5SWX8-2"/>
    <property type="nucleotide sequence ID" value="NM_001164245.2"/>
</dbReference>
<dbReference type="RefSeq" id="NP_001157718.1">
    <molecule id="Q5SWX8-4"/>
    <property type="nucleotide sequence ID" value="NM_001164246.2"/>
</dbReference>
<dbReference type="RefSeq" id="NP_060317.3">
    <molecule id="Q5SWX8-1"/>
    <property type="nucleotide sequence ID" value="NM_017847.5"/>
</dbReference>
<dbReference type="RefSeq" id="XP_011507962.1">
    <molecule id="Q5SWX8-1"/>
    <property type="nucleotide sequence ID" value="XM_011509660.3"/>
</dbReference>
<dbReference type="RefSeq" id="XP_047279394.1">
    <molecule id="Q5SWX8-1"/>
    <property type="nucleotide sequence ID" value="XM_047423438.1"/>
</dbReference>
<dbReference type="BioGRID" id="120291">
    <property type="interactions" value="167"/>
</dbReference>
<dbReference type="CORUM" id="Q5SWX8"/>
<dbReference type="FunCoup" id="Q5SWX8">
    <property type="interactions" value="1716"/>
</dbReference>
<dbReference type="IntAct" id="Q5SWX8">
    <property type="interactions" value="76"/>
</dbReference>
<dbReference type="MINT" id="Q5SWX8"/>
<dbReference type="STRING" id="9606.ENSP00000287859"/>
<dbReference type="GlyGen" id="Q5SWX8">
    <property type="glycosylation" value="1 site, 1 O-linked glycan (1 site)"/>
</dbReference>
<dbReference type="iPTMnet" id="Q5SWX8"/>
<dbReference type="PhosphoSitePlus" id="Q5SWX8"/>
<dbReference type="SwissPalm" id="Q5SWX8"/>
<dbReference type="BioMuta" id="C1orf27"/>
<dbReference type="DMDM" id="74743951"/>
<dbReference type="jPOST" id="Q5SWX8"/>
<dbReference type="MassIVE" id="Q5SWX8"/>
<dbReference type="PaxDb" id="9606-ENSP00000287859"/>
<dbReference type="PeptideAtlas" id="Q5SWX8"/>
<dbReference type="ProteomicsDB" id="63981">
    <molecule id="Q5SWX8-1"/>
</dbReference>
<dbReference type="ProteomicsDB" id="63982">
    <molecule id="Q5SWX8-2"/>
</dbReference>
<dbReference type="ProteomicsDB" id="63983">
    <molecule id="Q5SWX8-3"/>
</dbReference>
<dbReference type="Pumba" id="Q5SWX8"/>
<dbReference type="Antibodypedia" id="3028">
    <property type="antibodies" value="54 antibodies from 14 providers"/>
</dbReference>
<dbReference type="DNASU" id="54953"/>
<dbReference type="Ensembl" id="ENST00000287859.11">
    <molecule id="Q5SWX8-1"/>
    <property type="protein sequence ID" value="ENSP00000287859.6"/>
    <property type="gene ID" value="ENSG00000157181.16"/>
</dbReference>
<dbReference type="Ensembl" id="ENST00000367470.8">
    <molecule id="Q5SWX8-2"/>
    <property type="protein sequence ID" value="ENSP00000356440.3"/>
    <property type="gene ID" value="ENSG00000157181.16"/>
</dbReference>
<dbReference type="Ensembl" id="ENST00000419367.8">
    <molecule id="Q5SWX8-4"/>
    <property type="protein sequence ID" value="ENSP00000395084.3"/>
    <property type="gene ID" value="ENSG00000157181.16"/>
</dbReference>
<dbReference type="GeneID" id="54953"/>
<dbReference type="KEGG" id="hsa:54953"/>
<dbReference type="MANE-Select" id="ENST00000287859.11">
    <property type="protein sequence ID" value="ENSP00000287859.6"/>
    <property type="RefSeq nucleotide sequence ID" value="NM_017847.6"/>
    <property type="RefSeq protein sequence ID" value="NP_060317.3"/>
</dbReference>
<dbReference type="UCSC" id="uc057nzb.1">
    <molecule id="Q5SWX8-1"/>
    <property type="organism name" value="human"/>
</dbReference>
<dbReference type="AGR" id="HGNC:24299"/>
<dbReference type="CTD" id="54953"/>
<dbReference type="DisGeNET" id="54953"/>
<dbReference type="GeneCards" id="ODR4"/>
<dbReference type="HGNC" id="HGNC:24299">
    <property type="gene designation" value="ODR4"/>
</dbReference>
<dbReference type="HPA" id="ENSG00000157181">
    <property type="expression patterns" value="Low tissue specificity"/>
</dbReference>
<dbReference type="MIM" id="609335">
    <property type="type" value="gene"/>
</dbReference>
<dbReference type="neXtProt" id="NX_Q5SWX8"/>
<dbReference type="OpenTargets" id="ENSG00000157181"/>
<dbReference type="PharmGKB" id="PA134934744"/>
<dbReference type="VEuPathDB" id="HostDB:ENSG00000157181"/>
<dbReference type="eggNOG" id="KOG4703">
    <property type="taxonomic scope" value="Eukaryota"/>
</dbReference>
<dbReference type="GeneTree" id="ENSGT00390000012568"/>
<dbReference type="HOGENOM" id="CLU_043811_0_0_1"/>
<dbReference type="InParanoid" id="Q5SWX8"/>
<dbReference type="OMA" id="FNEPPRR"/>
<dbReference type="OrthoDB" id="21458at2759"/>
<dbReference type="PAN-GO" id="Q5SWX8">
    <property type="GO annotations" value="1 GO annotation based on evolutionary models"/>
</dbReference>
<dbReference type="PhylomeDB" id="Q5SWX8"/>
<dbReference type="TreeFam" id="TF323772"/>
<dbReference type="PathwayCommons" id="Q5SWX8"/>
<dbReference type="SignaLink" id="Q5SWX8"/>
<dbReference type="BioGRID-ORCS" id="54953">
    <property type="hits" value="143 hits in 1154 CRISPR screens"/>
</dbReference>
<dbReference type="ChiTaRS" id="C1orf27">
    <property type="organism name" value="human"/>
</dbReference>
<dbReference type="GenomeRNAi" id="54953"/>
<dbReference type="Pharos" id="Q5SWX8">
    <property type="development level" value="Tdark"/>
</dbReference>
<dbReference type="PRO" id="PR:Q5SWX8"/>
<dbReference type="Proteomes" id="UP000005640">
    <property type="component" value="Chromosome 1"/>
</dbReference>
<dbReference type="RNAct" id="Q5SWX8">
    <property type="molecule type" value="protein"/>
</dbReference>
<dbReference type="Bgee" id="ENSG00000157181">
    <property type="expression patterns" value="Expressed in corpus epididymis and 191 other cell types or tissues"/>
</dbReference>
<dbReference type="GO" id="GO:0016020">
    <property type="term" value="C:membrane"/>
    <property type="evidence" value="ECO:0007669"/>
    <property type="project" value="UniProtKB-SubCell"/>
</dbReference>
<dbReference type="GO" id="GO:0008104">
    <property type="term" value="P:protein localization"/>
    <property type="evidence" value="ECO:0000318"/>
    <property type="project" value="GO_Central"/>
</dbReference>
<dbReference type="InterPro" id="IPR029454">
    <property type="entry name" value="ODR-4-like"/>
</dbReference>
<dbReference type="PANTHER" id="PTHR33966">
    <property type="entry name" value="PROTEIN ODR-4 HOMOLOG"/>
    <property type="match status" value="1"/>
</dbReference>
<dbReference type="PANTHER" id="PTHR33966:SF1">
    <property type="entry name" value="PROTEIN ODR-4 HOMOLOG"/>
    <property type="match status" value="1"/>
</dbReference>
<dbReference type="Pfam" id="PF14778">
    <property type="entry name" value="ODR4-like"/>
    <property type="match status" value="1"/>
</dbReference>